<gene>
    <name evidence="1" type="primary">dxs</name>
    <name type="ordered locus">YPN_0911</name>
    <name type="ORF">YP516_0987</name>
</gene>
<proteinExistence type="inferred from homology"/>
<comment type="function">
    <text evidence="1">Catalyzes the acyloin condensation reaction between C atoms 2 and 3 of pyruvate and glyceraldehyde 3-phosphate to yield 1-deoxy-D-xylulose-5-phosphate (DXP).</text>
</comment>
<comment type="catalytic activity">
    <reaction evidence="1">
        <text>D-glyceraldehyde 3-phosphate + pyruvate + H(+) = 1-deoxy-D-xylulose 5-phosphate + CO2</text>
        <dbReference type="Rhea" id="RHEA:12605"/>
        <dbReference type="ChEBI" id="CHEBI:15361"/>
        <dbReference type="ChEBI" id="CHEBI:15378"/>
        <dbReference type="ChEBI" id="CHEBI:16526"/>
        <dbReference type="ChEBI" id="CHEBI:57792"/>
        <dbReference type="ChEBI" id="CHEBI:59776"/>
        <dbReference type="EC" id="2.2.1.7"/>
    </reaction>
</comment>
<comment type="cofactor">
    <cofactor evidence="1">
        <name>Mg(2+)</name>
        <dbReference type="ChEBI" id="CHEBI:18420"/>
    </cofactor>
    <text evidence="1">Binds 1 Mg(2+) ion per subunit.</text>
</comment>
<comment type="cofactor">
    <cofactor evidence="1">
        <name>thiamine diphosphate</name>
        <dbReference type="ChEBI" id="CHEBI:58937"/>
    </cofactor>
    <text evidence="1">Binds 1 thiamine pyrophosphate per subunit.</text>
</comment>
<comment type="pathway">
    <text evidence="1">Metabolic intermediate biosynthesis; 1-deoxy-D-xylulose 5-phosphate biosynthesis; 1-deoxy-D-xylulose 5-phosphate from D-glyceraldehyde 3-phosphate and pyruvate: step 1/1.</text>
</comment>
<comment type="subunit">
    <text evidence="1">Homodimer.</text>
</comment>
<comment type="similarity">
    <text evidence="1">Belongs to the transketolase family. DXPS subfamily.</text>
</comment>
<organism>
    <name type="scientific">Yersinia pestis bv. Antiqua (strain Nepal516)</name>
    <dbReference type="NCBI Taxonomy" id="377628"/>
    <lineage>
        <taxon>Bacteria</taxon>
        <taxon>Pseudomonadati</taxon>
        <taxon>Pseudomonadota</taxon>
        <taxon>Gammaproteobacteria</taxon>
        <taxon>Enterobacterales</taxon>
        <taxon>Yersiniaceae</taxon>
        <taxon>Yersinia</taxon>
    </lineage>
</organism>
<sequence length="619" mass="67674">MSLDIAKYPTLALAENPEELRMLPKESLPKLCDELRQYLLTCVSRSSGHFASGLGVVELTVALHYVYNTPFDHLIWDVGHQAYPHKILTGRRDRISTIRQKDGLHPFPWRGESEYDVLSVGHSSTSISAGLGMAVAAEREGKGRRTVCVIGDGAITAGMAFEAMSHAGDIHSDMLVILNDNGMSISENVGGLNNHLAQLLSGKLYASLREGGKKAFSALPPIKDLLKRTEEHLKGMVVPSTLFEELGFNYIGPVDGHDVHTLTQTLKNMRDLKSPQLLHIMTKKGKGYAPAEKDPIGWHAVPKFDPASGTLPKSQSSLPTYSKIFGEWLCETAAKDSKLMAVTPAMREGSGMVRFSREYPQQYFDVAIAEQHAVTFAAGLAIGGYKPVVAIYSTFLQRAYDQLIHDVAIQNLPVLFAIDRGGLVGADGQTHQGAFDLSFMRCIPNMVIMAPSDENECRQMLYTGYHHNGPAAVRYPRGNGTSAVLEPLEMLPIGKGVLRREGEKIAILCFGTLLAQAQLAAENLNATLVDMRFVKPLDEELVLEMAAKHQVLVTVEENAIMGGAGSGVNELLMAKRRWVPVLNIGLPDLFVPQGEQDEMRSELGLDAAGIQRQIEAWLA</sequence>
<name>DXS_YERPN</name>
<protein>
    <recommendedName>
        <fullName evidence="1">1-deoxy-D-xylulose-5-phosphate synthase</fullName>
        <ecNumber evidence="1">2.2.1.7</ecNumber>
    </recommendedName>
    <alternativeName>
        <fullName evidence="1">1-deoxyxylulose-5-phosphate synthase</fullName>
        <shortName evidence="1">DXP synthase</shortName>
        <shortName evidence="1">DXPS</shortName>
    </alternativeName>
</protein>
<keyword id="KW-0414">Isoprene biosynthesis</keyword>
<keyword id="KW-0460">Magnesium</keyword>
<keyword id="KW-0479">Metal-binding</keyword>
<keyword id="KW-0784">Thiamine biosynthesis</keyword>
<keyword id="KW-0786">Thiamine pyrophosphate</keyword>
<keyword id="KW-0808">Transferase</keyword>
<dbReference type="EC" id="2.2.1.7" evidence="1"/>
<dbReference type="EMBL" id="CP000305">
    <property type="protein sequence ID" value="ABG17243.1"/>
    <property type="molecule type" value="Genomic_DNA"/>
</dbReference>
<dbReference type="EMBL" id="ACNQ01000008">
    <property type="protein sequence ID" value="EEO77326.1"/>
    <property type="molecule type" value="Genomic_DNA"/>
</dbReference>
<dbReference type="RefSeq" id="WP_002208662.1">
    <property type="nucleotide sequence ID" value="NZ_ACNQ01000008.1"/>
</dbReference>
<dbReference type="SMR" id="Q1CL87"/>
<dbReference type="GeneID" id="57975536"/>
<dbReference type="KEGG" id="ypn:YPN_0911"/>
<dbReference type="HOGENOM" id="CLU_009227_1_4_6"/>
<dbReference type="UniPathway" id="UPA00064">
    <property type="reaction ID" value="UER00091"/>
</dbReference>
<dbReference type="Proteomes" id="UP000008936">
    <property type="component" value="Chromosome"/>
</dbReference>
<dbReference type="GO" id="GO:0005829">
    <property type="term" value="C:cytosol"/>
    <property type="evidence" value="ECO:0007669"/>
    <property type="project" value="TreeGrafter"/>
</dbReference>
<dbReference type="GO" id="GO:0008661">
    <property type="term" value="F:1-deoxy-D-xylulose-5-phosphate synthase activity"/>
    <property type="evidence" value="ECO:0007669"/>
    <property type="project" value="UniProtKB-UniRule"/>
</dbReference>
<dbReference type="GO" id="GO:0000287">
    <property type="term" value="F:magnesium ion binding"/>
    <property type="evidence" value="ECO:0007669"/>
    <property type="project" value="UniProtKB-UniRule"/>
</dbReference>
<dbReference type="GO" id="GO:0030976">
    <property type="term" value="F:thiamine pyrophosphate binding"/>
    <property type="evidence" value="ECO:0007669"/>
    <property type="project" value="UniProtKB-UniRule"/>
</dbReference>
<dbReference type="GO" id="GO:0052865">
    <property type="term" value="P:1-deoxy-D-xylulose 5-phosphate biosynthetic process"/>
    <property type="evidence" value="ECO:0007669"/>
    <property type="project" value="UniProtKB-UniPathway"/>
</dbReference>
<dbReference type="GO" id="GO:0019288">
    <property type="term" value="P:isopentenyl diphosphate biosynthetic process, methylerythritol 4-phosphate pathway"/>
    <property type="evidence" value="ECO:0007669"/>
    <property type="project" value="TreeGrafter"/>
</dbReference>
<dbReference type="GO" id="GO:0016114">
    <property type="term" value="P:terpenoid biosynthetic process"/>
    <property type="evidence" value="ECO:0007669"/>
    <property type="project" value="UniProtKB-UniRule"/>
</dbReference>
<dbReference type="GO" id="GO:0009228">
    <property type="term" value="P:thiamine biosynthetic process"/>
    <property type="evidence" value="ECO:0007669"/>
    <property type="project" value="UniProtKB-UniRule"/>
</dbReference>
<dbReference type="CDD" id="cd02007">
    <property type="entry name" value="TPP_DXS"/>
    <property type="match status" value="1"/>
</dbReference>
<dbReference type="CDD" id="cd07033">
    <property type="entry name" value="TPP_PYR_DXS_TK_like"/>
    <property type="match status" value="1"/>
</dbReference>
<dbReference type="FunFam" id="3.40.50.920:FF:000002">
    <property type="entry name" value="1-deoxy-D-xylulose-5-phosphate synthase"/>
    <property type="match status" value="1"/>
</dbReference>
<dbReference type="FunFam" id="3.40.50.970:FF:000005">
    <property type="entry name" value="1-deoxy-D-xylulose-5-phosphate synthase"/>
    <property type="match status" value="1"/>
</dbReference>
<dbReference type="Gene3D" id="3.40.50.920">
    <property type="match status" value="1"/>
</dbReference>
<dbReference type="Gene3D" id="3.40.50.970">
    <property type="match status" value="2"/>
</dbReference>
<dbReference type="HAMAP" id="MF_00315">
    <property type="entry name" value="DXP_synth"/>
    <property type="match status" value="1"/>
</dbReference>
<dbReference type="InterPro" id="IPR005477">
    <property type="entry name" value="Dxylulose-5-P_synthase"/>
</dbReference>
<dbReference type="InterPro" id="IPR029061">
    <property type="entry name" value="THDP-binding"/>
</dbReference>
<dbReference type="InterPro" id="IPR009014">
    <property type="entry name" value="Transketo_C/PFOR_II"/>
</dbReference>
<dbReference type="InterPro" id="IPR005475">
    <property type="entry name" value="Transketolase-like_Pyr-bd"/>
</dbReference>
<dbReference type="InterPro" id="IPR020826">
    <property type="entry name" value="Transketolase_BS"/>
</dbReference>
<dbReference type="InterPro" id="IPR033248">
    <property type="entry name" value="Transketolase_C"/>
</dbReference>
<dbReference type="InterPro" id="IPR049557">
    <property type="entry name" value="Transketolase_CS"/>
</dbReference>
<dbReference type="NCBIfam" id="TIGR00204">
    <property type="entry name" value="dxs"/>
    <property type="match status" value="1"/>
</dbReference>
<dbReference type="NCBIfam" id="NF003933">
    <property type="entry name" value="PRK05444.2-2"/>
    <property type="match status" value="1"/>
</dbReference>
<dbReference type="PANTHER" id="PTHR43322">
    <property type="entry name" value="1-D-DEOXYXYLULOSE 5-PHOSPHATE SYNTHASE-RELATED"/>
    <property type="match status" value="1"/>
</dbReference>
<dbReference type="PANTHER" id="PTHR43322:SF5">
    <property type="entry name" value="1-DEOXY-D-XYLULOSE-5-PHOSPHATE SYNTHASE, CHLOROPLASTIC"/>
    <property type="match status" value="1"/>
</dbReference>
<dbReference type="Pfam" id="PF13292">
    <property type="entry name" value="DXP_synthase_N"/>
    <property type="match status" value="1"/>
</dbReference>
<dbReference type="Pfam" id="PF02779">
    <property type="entry name" value="Transket_pyr"/>
    <property type="match status" value="1"/>
</dbReference>
<dbReference type="Pfam" id="PF02780">
    <property type="entry name" value="Transketolase_C"/>
    <property type="match status" value="1"/>
</dbReference>
<dbReference type="SMART" id="SM00861">
    <property type="entry name" value="Transket_pyr"/>
    <property type="match status" value="1"/>
</dbReference>
<dbReference type="SUPFAM" id="SSF52518">
    <property type="entry name" value="Thiamin diphosphate-binding fold (THDP-binding)"/>
    <property type="match status" value="2"/>
</dbReference>
<dbReference type="SUPFAM" id="SSF52922">
    <property type="entry name" value="TK C-terminal domain-like"/>
    <property type="match status" value="1"/>
</dbReference>
<dbReference type="PROSITE" id="PS00801">
    <property type="entry name" value="TRANSKETOLASE_1"/>
    <property type="match status" value="1"/>
</dbReference>
<dbReference type="PROSITE" id="PS00802">
    <property type="entry name" value="TRANSKETOLASE_2"/>
    <property type="match status" value="1"/>
</dbReference>
<accession>Q1CL87</accession>
<accession>C4GQI5</accession>
<evidence type="ECO:0000255" key="1">
    <source>
        <dbReference type="HAMAP-Rule" id="MF_00315"/>
    </source>
</evidence>
<reference key="1">
    <citation type="journal article" date="2006" name="J. Bacteriol.">
        <title>Complete genome sequence of Yersinia pestis strains Antiqua and Nepal516: evidence of gene reduction in an emerging pathogen.</title>
        <authorList>
            <person name="Chain P.S.G."/>
            <person name="Hu P."/>
            <person name="Malfatti S.A."/>
            <person name="Radnedge L."/>
            <person name="Larimer F."/>
            <person name="Vergez L.M."/>
            <person name="Worsham P."/>
            <person name="Chu M.C."/>
            <person name="Andersen G.L."/>
        </authorList>
    </citation>
    <scope>NUCLEOTIDE SEQUENCE [LARGE SCALE GENOMIC DNA]</scope>
    <source>
        <strain>Nepal516</strain>
    </source>
</reference>
<reference key="2">
    <citation type="submission" date="2009-04" db="EMBL/GenBank/DDBJ databases">
        <title>Yersinia pestis Nepal516A whole genome shotgun sequencing project.</title>
        <authorList>
            <person name="Plunkett G. III"/>
            <person name="Anderson B.D."/>
            <person name="Baumler D.J."/>
            <person name="Burland V."/>
            <person name="Cabot E.L."/>
            <person name="Glasner J.D."/>
            <person name="Mau B."/>
            <person name="Neeno-Eckwall E."/>
            <person name="Perna N.T."/>
            <person name="Munk A.C."/>
            <person name="Tapia R."/>
            <person name="Green L.D."/>
            <person name="Rogers Y.C."/>
            <person name="Detter J.C."/>
            <person name="Bruce D.C."/>
            <person name="Brettin T.S."/>
        </authorList>
    </citation>
    <scope>NUCLEOTIDE SEQUENCE [LARGE SCALE GENOMIC DNA]</scope>
    <source>
        <strain>Nepal516</strain>
    </source>
</reference>
<feature type="chain" id="PRO_0000256508" description="1-deoxy-D-xylulose-5-phosphate synthase">
    <location>
        <begin position="1"/>
        <end position="619"/>
    </location>
</feature>
<feature type="binding site" evidence="1">
    <location>
        <position position="80"/>
    </location>
    <ligand>
        <name>thiamine diphosphate</name>
        <dbReference type="ChEBI" id="CHEBI:58937"/>
    </ligand>
</feature>
<feature type="binding site" evidence="1">
    <location>
        <begin position="121"/>
        <end position="123"/>
    </location>
    <ligand>
        <name>thiamine diphosphate</name>
        <dbReference type="ChEBI" id="CHEBI:58937"/>
    </ligand>
</feature>
<feature type="binding site" evidence="1">
    <location>
        <position position="152"/>
    </location>
    <ligand>
        <name>Mg(2+)</name>
        <dbReference type="ChEBI" id="CHEBI:18420"/>
    </ligand>
</feature>
<feature type="binding site" evidence="1">
    <location>
        <begin position="153"/>
        <end position="154"/>
    </location>
    <ligand>
        <name>thiamine diphosphate</name>
        <dbReference type="ChEBI" id="CHEBI:58937"/>
    </ligand>
</feature>
<feature type="binding site" evidence="1">
    <location>
        <position position="181"/>
    </location>
    <ligand>
        <name>Mg(2+)</name>
        <dbReference type="ChEBI" id="CHEBI:18420"/>
    </ligand>
</feature>
<feature type="binding site" evidence="1">
    <location>
        <position position="181"/>
    </location>
    <ligand>
        <name>thiamine diphosphate</name>
        <dbReference type="ChEBI" id="CHEBI:58937"/>
    </ligand>
</feature>
<feature type="binding site" evidence="1">
    <location>
        <position position="288"/>
    </location>
    <ligand>
        <name>thiamine diphosphate</name>
        <dbReference type="ChEBI" id="CHEBI:58937"/>
    </ligand>
</feature>
<feature type="binding site" evidence="1">
    <location>
        <position position="370"/>
    </location>
    <ligand>
        <name>thiamine diphosphate</name>
        <dbReference type="ChEBI" id="CHEBI:58937"/>
    </ligand>
</feature>